<evidence type="ECO:0000250" key="1">
    <source>
        <dbReference type="UniProtKB" id="D3Z291"/>
    </source>
</evidence>
<evidence type="ECO:0000250" key="2">
    <source>
        <dbReference type="UniProtKB" id="Q8IU99"/>
    </source>
</evidence>
<evidence type="ECO:0000255" key="3"/>
<evidence type="ECO:0000256" key="4">
    <source>
        <dbReference type="SAM" id="MobiDB-lite"/>
    </source>
</evidence>
<evidence type="ECO:0000269" key="5">
    <source>
    </source>
</evidence>
<evidence type="ECO:0000303" key="6">
    <source>
    </source>
</evidence>
<evidence type="ECO:0000305" key="7"/>
<evidence type="ECO:0000305" key="8">
    <source>
    </source>
</evidence>
<evidence type="ECO:0007744" key="9">
    <source>
        <dbReference type="PDB" id="6LMT"/>
    </source>
</evidence>
<evidence type="ECO:0007829" key="10">
    <source>
        <dbReference type="PDB" id="6LMT"/>
    </source>
</evidence>
<reference key="1">
    <citation type="journal article" date="2007" name="Nature">
        <title>The medaka draft genome and insights into vertebrate genome evolution.</title>
        <authorList>
            <person name="Kasahara M."/>
            <person name="Naruse K."/>
            <person name="Sasaki S."/>
            <person name="Nakatani Y."/>
            <person name="Qu W."/>
            <person name="Ahsan B."/>
            <person name="Yamada T."/>
            <person name="Nagayasu Y."/>
            <person name="Doi K."/>
            <person name="Kasai Y."/>
            <person name="Jindo T."/>
            <person name="Kobayashi D."/>
            <person name="Shimada A."/>
            <person name="Toyoda A."/>
            <person name="Kuroki Y."/>
            <person name="Fujiyama A."/>
            <person name="Sasaki T."/>
            <person name="Shimizu A."/>
            <person name="Asakawa S."/>
            <person name="Shimizu N."/>
            <person name="Hashimoto S."/>
            <person name="Yang J."/>
            <person name="Lee Y."/>
            <person name="Matsushima K."/>
            <person name="Sugano S."/>
            <person name="Sakaizumi M."/>
            <person name="Narita T."/>
            <person name="Ohishi K."/>
            <person name="Haga S."/>
            <person name="Ohta F."/>
            <person name="Nomoto H."/>
            <person name="Nogata K."/>
            <person name="Morishita T."/>
            <person name="Endo T."/>
            <person name="Shin-I T."/>
            <person name="Takeda H."/>
            <person name="Morishita S."/>
            <person name="Kohara Y."/>
        </authorList>
    </citation>
    <scope>NUCLEOTIDE SEQUENCE [LARGE SCALE GENOMIC DNA]</scope>
    <source>
        <strain>Hd-rR</strain>
    </source>
</reference>
<reference key="2">
    <citation type="journal article" date="2020" name="Sci. Adv.">
        <title>Cryo-EM structures of calcium homeostasis modulator channels in diverse oligomeric assemblies.</title>
        <authorList>
            <person name="Demura K."/>
            <person name="Kusakizako T."/>
            <person name="Shihoya W."/>
            <person name="Hiraizumi M."/>
            <person name="Nomura K."/>
            <person name="Shimada H."/>
            <person name="Yamashita K."/>
            <person name="Nishizawa T."/>
            <person name="Taruno A."/>
            <person name="Nureki O."/>
        </authorList>
    </citation>
    <scope>STRUCTURE BY ELECTRON MICROSCOPY (2.66 ANGSTROMS) OF 1-295</scope>
    <scope>DISULFIDE BOND</scope>
    <scope>TOPOLOGY</scope>
    <scope>REGION</scope>
    <scope>FUNCTION</scope>
    <scope>TRANSPORTER ACTIVITY</scope>
    <scope>ACTIVITY REGULATION</scope>
    <scope>SUBUNIT</scope>
    <scope>MUTAGENESIS OF 1-MET--LEU-11 AND 1-MET--MET-19</scope>
</reference>
<protein>
    <recommendedName>
        <fullName>Calcium homeostasis modulator 1</fullName>
    </recommendedName>
</protein>
<gene>
    <name evidence="6" type="primary">CALHM1</name>
</gene>
<accession>H2MCM1</accession>
<feature type="chain" id="PRO_0000460370" description="Calcium homeostasis modulator 1">
    <location>
        <begin position="1"/>
        <end position="351"/>
    </location>
</feature>
<feature type="topological domain" description="Cytoplasmic" evidence="7">
    <location>
        <begin position="1"/>
        <end position="20"/>
    </location>
</feature>
<feature type="transmembrane region" description="Helical; Name=S1" evidence="5 9">
    <location>
        <begin position="21"/>
        <end position="36"/>
    </location>
</feature>
<feature type="topological domain" description="Extracellular" evidence="7">
    <location>
        <begin position="37"/>
        <end position="48"/>
    </location>
</feature>
<feature type="transmembrane region" description="Helical; Name=S2" evidence="5 9">
    <location>
        <begin position="49"/>
        <end position="71"/>
    </location>
</feature>
<feature type="topological domain" description="Cytoplasmic" evidence="7">
    <location>
        <begin position="72"/>
        <end position="98"/>
    </location>
</feature>
<feature type="transmembrane region" description="Helical; Name=S3" evidence="5 9">
    <location>
        <begin position="99"/>
        <end position="124"/>
    </location>
</feature>
<feature type="topological domain" description="Extracellular" evidence="7">
    <location>
        <begin position="125"/>
        <end position="177"/>
    </location>
</feature>
<feature type="transmembrane region" description="Helical; Name=S4" evidence="5 9">
    <location>
        <begin position="178"/>
        <end position="203"/>
    </location>
</feature>
<feature type="topological domain" description="Cytoplasmic" evidence="7">
    <location>
        <begin position="204"/>
        <end position="351"/>
    </location>
</feature>
<feature type="region of interest" description="Central pore" evidence="8">
    <location>
        <begin position="9"/>
        <end position="36"/>
    </location>
</feature>
<feature type="region of interest" description="Phospholipid-binding" evidence="2">
    <location>
        <begin position="62"/>
        <end position="69"/>
    </location>
</feature>
<feature type="region of interest" description="Phospholipid-binding" evidence="2">
    <location>
        <begin position="104"/>
        <end position="116"/>
    </location>
</feature>
<feature type="region of interest" description="Phospholipid-binding" evidence="2">
    <location>
        <begin position="189"/>
        <end position="199"/>
    </location>
</feature>
<feature type="region of interest" description="Disordered" evidence="4">
    <location>
        <begin position="259"/>
        <end position="281"/>
    </location>
</feature>
<feature type="compositionally biased region" description="Basic and acidic residues" evidence="4">
    <location>
        <begin position="263"/>
        <end position="281"/>
    </location>
</feature>
<feature type="lipid moiety-binding region" description="S-palmitoyl cysteine" evidence="1">
    <location>
        <position position="100"/>
    </location>
</feature>
<feature type="lipid moiety-binding region" description="S-palmitoyl cysteine" evidence="1">
    <location>
        <position position="205"/>
    </location>
</feature>
<feature type="glycosylation site" description="N-linked (GlcNAc...) asparagine" evidence="2">
    <location>
        <position position="139"/>
    </location>
</feature>
<feature type="disulfide bond" evidence="5 9">
    <location>
        <begin position="41"/>
        <end position="126"/>
    </location>
</feature>
<feature type="disulfide bond" evidence="5 9">
    <location>
        <begin position="43"/>
        <end position="160"/>
    </location>
</feature>
<feature type="mutagenesis site" description="Markedly enhances ATP release." evidence="5">
    <location>
        <begin position="1"/>
        <end position="19"/>
    </location>
</feature>
<feature type="mutagenesis site" description="Markedly enhances ATP release." evidence="5">
    <location>
        <begin position="1"/>
        <end position="11"/>
    </location>
</feature>
<feature type="helix" evidence="10">
    <location>
        <begin position="9"/>
        <end position="13"/>
    </location>
</feature>
<feature type="helix" evidence="10">
    <location>
        <begin position="21"/>
        <end position="36"/>
    </location>
</feature>
<feature type="turn" evidence="10">
    <location>
        <begin position="45"/>
        <end position="47"/>
    </location>
</feature>
<feature type="helix" evidence="10">
    <location>
        <begin position="48"/>
        <end position="70"/>
    </location>
</feature>
<feature type="helix" evidence="10">
    <location>
        <begin position="74"/>
        <end position="82"/>
    </location>
</feature>
<feature type="turn" evidence="10">
    <location>
        <begin position="85"/>
        <end position="87"/>
    </location>
</feature>
<feature type="helix" evidence="10">
    <location>
        <begin position="92"/>
        <end position="105"/>
    </location>
</feature>
<feature type="helix" evidence="10">
    <location>
        <begin position="108"/>
        <end position="120"/>
    </location>
</feature>
<feature type="helix" evidence="10">
    <location>
        <begin position="122"/>
        <end position="128"/>
    </location>
</feature>
<feature type="helix" evidence="10">
    <location>
        <begin position="129"/>
        <end position="131"/>
    </location>
</feature>
<feature type="helix" evidence="10">
    <location>
        <begin position="134"/>
        <end position="136"/>
    </location>
</feature>
<feature type="strand" evidence="10">
    <location>
        <begin position="140"/>
        <end position="143"/>
    </location>
</feature>
<feature type="helix" evidence="10">
    <location>
        <begin position="148"/>
        <end position="155"/>
    </location>
</feature>
<feature type="turn" evidence="10">
    <location>
        <begin position="156"/>
        <end position="159"/>
    </location>
</feature>
<feature type="helix" evidence="10">
    <location>
        <begin position="161"/>
        <end position="163"/>
    </location>
</feature>
<feature type="helix" evidence="10">
    <location>
        <begin position="167"/>
        <end position="202"/>
    </location>
</feature>
<feature type="helix" evidence="10">
    <location>
        <begin position="203"/>
        <end position="205"/>
    </location>
</feature>
<feature type="helix" evidence="10">
    <location>
        <begin position="210"/>
        <end position="258"/>
    </location>
</feature>
<keyword id="KW-0002">3D-structure</keyword>
<keyword id="KW-0106">Calcium</keyword>
<keyword id="KW-0107">Calcium channel</keyword>
<keyword id="KW-0109">Calcium transport</keyword>
<keyword id="KW-1003">Cell membrane</keyword>
<keyword id="KW-1015">Disulfide bond</keyword>
<keyword id="KW-0256">Endoplasmic reticulum</keyword>
<keyword id="KW-0325">Glycoprotein</keyword>
<keyword id="KW-0407">Ion channel</keyword>
<keyword id="KW-0406">Ion transport</keyword>
<keyword id="KW-0449">Lipoprotein</keyword>
<keyword id="KW-0472">Membrane</keyword>
<keyword id="KW-0564">Palmitate</keyword>
<keyword id="KW-1185">Reference proteome</keyword>
<keyword id="KW-0812">Transmembrane</keyword>
<keyword id="KW-1133">Transmembrane helix</keyword>
<keyword id="KW-0813">Transport</keyword>
<comment type="function">
    <text evidence="1 2 5">Pore-forming subunit of a voltage-gated ion channel. Has poor ion selectivity and forms a wide pore that mediates permeation of small ions including Ca(2+), Na(+), K(+) and Cl(-), as well as larger ions such as ATP(4-).</text>
</comment>
<comment type="catalytic activity">
    <reaction evidence="5">
        <text>ATP(in) = ATP(out)</text>
        <dbReference type="Rhea" id="RHEA:75687"/>
        <dbReference type="ChEBI" id="CHEBI:30616"/>
    </reaction>
</comment>
<comment type="catalytic activity">
    <reaction evidence="1 2">
        <text>Ca(2+)(in) = Ca(2+)(out)</text>
        <dbReference type="Rhea" id="RHEA:29671"/>
        <dbReference type="ChEBI" id="CHEBI:29108"/>
    </reaction>
</comment>
<comment type="catalytic activity">
    <reaction evidence="2">
        <text>Mg(2+)(in) = Mg(2+)(out)</text>
        <dbReference type="Rhea" id="RHEA:29827"/>
        <dbReference type="ChEBI" id="CHEBI:18420"/>
    </reaction>
</comment>
<comment type="catalytic activity">
    <reaction evidence="1 2">
        <text>Na(+)(in) = Na(+)(out)</text>
        <dbReference type="Rhea" id="RHEA:34963"/>
        <dbReference type="ChEBI" id="CHEBI:29101"/>
    </reaction>
</comment>
<comment type="catalytic activity">
    <reaction evidence="1 2">
        <text>K(+)(in) = K(+)(out)</text>
        <dbReference type="Rhea" id="RHEA:29463"/>
        <dbReference type="ChEBI" id="CHEBI:29103"/>
    </reaction>
</comment>
<comment type="catalytic activity">
    <reaction evidence="2">
        <text>Li(+)(in) = Li(+)(out)</text>
        <dbReference type="Rhea" id="RHEA:78551"/>
        <dbReference type="ChEBI" id="CHEBI:49713"/>
    </reaction>
</comment>
<comment type="catalytic activity">
    <reaction evidence="2">
        <text>Rb(+)(in) = Rb(+)(out)</text>
        <dbReference type="Rhea" id="RHEA:78547"/>
        <dbReference type="ChEBI" id="CHEBI:49847"/>
    </reaction>
</comment>
<comment type="catalytic activity">
    <reaction evidence="2">
        <text>Cs(+)(in) = Cs(+)(out)</text>
        <dbReference type="Rhea" id="RHEA:78555"/>
        <dbReference type="ChEBI" id="CHEBI:49547"/>
    </reaction>
</comment>
<comment type="catalytic activity">
    <reaction evidence="1 2">
        <text>chloride(in) = chloride(out)</text>
        <dbReference type="Rhea" id="RHEA:29823"/>
        <dbReference type="ChEBI" id="CHEBI:17996"/>
    </reaction>
</comment>
<comment type="activity regulation">
    <text evidence="5">Activated in response to membrane depolarization and low extracellular Ca(2+) concentration. Inhibited by ruthenium red.</text>
</comment>
<comment type="subunit">
    <text evidence="1 2">Oligomerizes to form hexamers and octamers. Does not form gap junctions (By similarity). Associates with CALHM3 as a pore-forming subunit in a hetero-hexameric channel complex (By similarity).</text>
</comment>
<comment type="subcellular location">
    <subcellularLocation>
        <location evidence="2">Cell membrane</location>
        <topology evidence="3">Multi-pass membrane protein</topology>
    </subcellularLocation>
    <subcellularLocation>
        <location evidence="2">Endoplasmic reticulum membrane</location>
        <topology evidence="3">Multi-pass membrane protein</topology>
    </subcellularLocation>
    <subcellularLocation>
        <location evidence="2">Basolateral cell membrane</location>
        <topology evidence="3">Multi-pass membrane protein</topology>
    </subcellularLocation>
</comment>
<comment type="domain">
    <text evidence="2">A phospholipid-binding pocket is formed between conserved regions of S3 and S4 helices of one subunit and S2 of the adjacent subunit. It may regulate channel assembly and gating.</text>
</comment>
<comment type="PTM">
    <text evidence="1">N-glycosylated.</text>
</comment>
<comment type="PTM">
    <text evidence="1">Palmitoylated.</text>
</comment>
<comment type="similarity">
    <text evidence="7">Belongs to the CALHM family.</text>
</comment>
<proteinExistence type="evidence at protein level"/>
<name>CAHM1_ORYLA</name>
<sequence length="351" mass="40485">MDKFRMMFQFLQSNQESFMNGICGIMALASAQMYSSFEFSCPCMPEYNYTYGIGLLIIPPIWFFLLGFVLNNNVSVLAEEWKRPTGRRTKDPSVLRYMLCSITQRSLIAPAVWVSVTLMDGKSFLCAFSINLDIEKFGNASLVIGMTETEKLKFLARIPCKDLFEDNEVRVAATRYIKCISQACGWMFLLMMTFTAFLIRAIRPCFTQAAFLKTKYWSHYIDIERKMFDETCKEHAKSFAKVCIHQYFENISGEMQNFHRHQSKDTSDAEEEEKQRSDEDKLLGIKAQEDMNKVLWNWHTCKPALALRKDHLDTESNGKLNGTMNGAVNGFAQGHTHDVAKKEWAVYYSKV</sequence>
<organism>
    <name type="scientific">Oryzias latipes</name>
    <name type="common">Japanese rice fish</name>
    <name type="synonym">Japanese killifish</name>
    <dbReference type="NCBI Taxonomy" id="8090"/>
    <lineage>
        <taxon>Eukaryota</taxon>
        <taxon>Metazoa</taxon>
        <taxon>Chordata</taxon>
        <taxon>Craniata</taxon>
        <taxon>Vertebrata</taxon>
        <taxon>Euteleostomi</taxon>
        <taxon>Actinopterygii</taxon>
        <taxon>Neopterygii</taxon>
        <taxon>Teleostei</taxon>
        <taxon>Neoteleostei</taxon>
        <taxon>Acanthomorphata</taxon>
        <taxon>Ovalentaria</taxon>
        <taxon>Atherinomorphae</taxon>
        <taxon>Beloniformes</taxon>
        <taxon>Adrianichthyidae</taxon>
        <taxon>Oryziinae</taxon>
        <taxon>Oryzias</taxon>
    </lineage>
</organism>
<dbReference type="RefSeq" id="XP_004066291.1">
    <property type="nucleotide sequence ID" value="XM_004066243.2"/>
</dbReference>
<dbReference type="PDB" id="6LMT">
    <property type="method" value="EM"/>
    <property type="resolution" value="2.66 A"/>
    <property type="chains" value="A/B/C/D/E/F/G/H=1-295"/>
</dbReference>
<dbReference type="PDB" id="6LMW">
    <property type="method" value="EM"/>
    <property type="resolution" value="3.40 A"/>
    <property type="chains" value="A/B/C/D/E/F/G/H=1-209"/>
</dbReference>
<dbReference type="PDB" id="6LMX">
    <property type="method" value="EM"/>
    <property type="resolution" value="3.40 A"/>
    <property type="chains" value="A/B/C/D/E/F/G/H/I=1-209"/>
</dbReference>
<dbReference type="PDBsum" id="6LMT"/>
<dbReference type="PDBsum" id="6LMW"/>
<dbReference type="PDBsum" id="6LMX"/>
<dbReference type="EMDB" id="EMD-0919"/>
<dbReference type="SMR" id="H2MCM1"/>
<dbReference type="STRING" id="8090.ENSORLP00000035434"/>
<dbReference type="TCDB" id="1.A.84.1.9">
    <property type="family name" value="the calcium homeostasis modulator ca(2+) channel (calhm-c) family"/>
</dbReference>
<dbReference type="Ensembl" id="ENSORLT00000016309.2">
    <property type="protein sequence ID" value="ENSORLP00000016308.2"/>
    <property type="gene ID" value="ENSORLG00000013016.2"/>
</dbReference>
<dbReference type="Ensembl" id="ENSORLT00000034737.1">
    <property type="protein sequence ID" value="ENSORLP00000035434.1"/>
    <property type="gene ID" value="ENSORLG00000013016.2"/>
</dbReference>
<dbReference type="eggNOG" id="ENOG502RCIV">
    <property type="taxonomic scope" value="Eukaryota"/>
</dbReference>
<dbReference type="GeneTree" id="ENSGT01030000234610"/>
<dbReference type="HOGENOM" id="CLU_069286_0_0_1"/>
<dbReference type="OrthoDB" id="5978124at2759"/>
<dbReference type="TreeFam" id="TF329085"/>
<dbReference type="Proteomes" id="UP000001038">
    <property type="component" value="Chromosome 1"/>
</dbReference>
<dbReference type="Proteomes" id="UP000265180">
    <property type="component" value="Unplaced"/>
</dbReference>
<dbReference type="Proteomes" id="UP000265200">
    <property type="component" value="Unplaced"/>
</dbReference>
<dbReference type="Bgee" id="ENSORLG00000013016">
    <property type="expression patterns" value="Expressed in intestine and 6 other cell types or tissues"/>
</dbReference>
<dbReference type="GO" id="GO:0016323">
    <property type="term" value="C:basolateral plasma membrane"/>
    <property type="evidence" value="ECO:0007669"/>
    <property type="project" value="UniProtKB-SubCell"/>
</dbReference>
<dbReference type="GO" id="GO:0005789">
    <property type="term" value="C:endoplasmic reticulum membrane"/>
    <property type="evidence" value="ECO:0007669"/>
    <property type="project" value="UniProtKB-SubCell"/>
</dbReference>
<dbReference type="GO" id="GO:0005886">
    <property type="term" value="C:plasma membrane"/>
    <property type="evidence" value="ECO:0000318"/>
    <property type="project" value="GO_Central"/>
</dbReference>
<dbReference type="GO" id="GO:0005262">
    <property type="term" value="F:calcium channel activity"/>
    <property type="evidence" value="ECO:0007669"/>
    <property type="project" value="UniProtKB-KW"/>
</dbReference>
<dbReference type="GO" id="GO:0005261">
    <property type="term" value="F:monoatomic cation channel activity"/>
    <property type="evidence" value="ECO:0000318"/>
    <property type="project" value="GO_Central"/>
</dbReference>
<dbReference type="GO" id="GO:1904669">
    <property type="term" value="P:ATP export"/>
    <property type="evidence" value="ECO:0000314"/>
    <property type="project" value="UniProtKB"/>
</dbReference>
<dbReference type="InterPro" id="IPR029569">
    <property type="entry name" value="CALHM"/>
</dbReference>
<dbReference type="PANTHER" id="PTHR32261">
    <property type="entry name" value="CALCIUM HOMEOSTASIS MODULATOR PROTEIN"/>
    <property type="match status" value="1"/>
</dbReference>
<dbReference type="PANTHER" id="PTHR32261:SF2">
    <property type="entry name" value="CALCIUM HOMEOSTASIS MODULATOR PROTEIN 1"/>
    <property type="match status" value="1"/>
</dbReference>
<dbReference type="Pfam" id="PF14798">
    <property type="entry name" value="Ca_hom_mod"/>
    <property type="match status" value="1"/>
</dbReference>